<accession>Q0HKV9</accession>
<feature type="chain" id="PRO_1000011522" description="4-hydroxy-3-methylbut-2-en-1-yl diphosphate synthase (flavodoxin)">
    <location>
        <begin position="1"/>
        <end position="371"/>
    </location>
</feature>
<feature type="binding site" evidence="1">
    <location>
        <position position="270"/>
    </location>
    <ligand>
        <name>[4Fe-4S] cluster</name>
        <dbReference type="ChEBI" id="CHEBI:49883"/>
    </ligand>
</feature>
<feature type="binding site" evidence="1">
    <location>
        <position position="273"/>
    </location>
    <ligand>
        <name>[4Fe-4S] cluster</name>
        <dbReference type="ChEBI" id="CHEBI:49883"/>
    </ligand>
</feature>
<feature type="binding site" evidence="1">
    <location>
        <position position="305"/>
    </location>
    <ligand>
        <name>[4Fe-4S] cluster</name>
        <dbReference type="ChEBI" id="CHEBI:49883"/>
    </ligand>
</feature>
<feature type="binding site" evidence="1">
    <location>
        <position position="312"/>
    </location>
    <ligand>
        <name>[4Fe-4S] cluster</name>
        <dbReference type="ChEBI" id="CHEBI:49883"/>
    </ligand>
</feature>
<reference key="1">
    <citation type="submission" date="2006-08" db="EMBL/GenBank/DDBJ databases">
        <title>Complete sequence of Shewanella sp. MR-4.</title>
        <authorList>
            <consortium name="US DOE Joint Genome Institute"/>
            <person name="Copeland A."/>
            <person name="Lucas S."/>
            <person name="Lapidus A."/>
            <person name="Barry K."/>
            <person name="Detter J.C."/>
            <person name="Glavina del Rio T."/>
            <person name="Hammon N."/>
            <person name="Israni S."/>
            <person name="Dalin E."/>
            <person name="Tice H."/>
            <person name="Pitluck S."/>
            <person name="Kiss H."/>
            <person name="Brettin T."/>
            <person name="Bruce D."/>
            <person name="Han C."/>
            <person name="Tapia R."/>
            <person name="Gilna P."/>
            <person name="Schmutz J."/>
            <person name="Larimer F."/>
            <person name="Land M."/>
            <person name="Hauser L."/>
            <person name="Kyrpides N."/>
            <person name="Mikhailova N."/>
            <person name="Nealson K."/>
            <person name="Konstantinidis K."/>
            <person name="Klappenbach J."/>
            <person name="Tiedje J."/>
            <person name="Richardson P."/>
        </authorList>
    </citation>
    <scope>NUCLEOTIDE SEQUENCE [LARGE SCALE GENOMIC DNA]</scope>
    <source>
        <strain>MR-4</strain>
    </source>
</reference>
<keyword id="KW-0004">4Fe-4S</keyword>
<keyword id="KW-0408">Iron</keyword>
<keyword id="KW-0411">Iron-sulfur</keyword>
<keyword id="KW-0414">Isoprene biosynthesis</keyword>
<keyword id="KW-0479">Metal-binding</keyword>
<keyword id="KW-0560">Oxidoreductase</keyword>
<dbReference type="EC" id="1.17.7.3" evidence="1"/>
<dbReference type="EMBL" id="CP000446">
    <property type="protein sequence ID" value="ABI38308.1"/>
    <property type="molecule type" value="Genomic_DNA"/>
</dbReference>
<dbReference type="RefSeq" id="WP_011622016.1">
    <property type="nucleotide sequence ID" value="NC_008321.1"/>
</dbReference>
<dbReference type="SMR" id="Q0HKV9"/>
<dbReference type="GeneID" id="94727240"/>
<dbReference type="KEGG" id="she:Shewmr4_1228"/>
<dbReference type="HOGENOM" id="CLU_042258_0_0_6"/>
<dbReference type="UniPathway" id="UPA00056">
    <property type="reaction ID" value="UER00096"/>
</dbReference>
<dbReference type="GO" id="GO:0051539">
    <property type="term" value="F:4 iron, 4 sulfur cluster binding"/>
    <property type="evidence" value="ECO:0007669"/>
    <property type="project" value="UniProtKB-UniRule"/>
</dbReference>
<dbReference type="GO" id="GO:0046429">
    <property type="term" value="F:4-hydroxy-3-methylbut-2-en-1-yl diphosphate synthase activity (ferredoxin)"/>
    <property type="evidence" value="ECO:0007669"/>
    <property type="project" value="UniProtKB-UniRule"/>
</dbReference>
<dbReference type="GO" id="GO:0141197">
    <property type="term" value="F:4-hydroxy-3-methylbut-2-enyl-diphosphate synthase activity (flavodoxin)"/>
    <property type="evidence" value="ECO:0007669"/>
    <property type="project" value="UniProtKB-EC"/>
</dbReference>
<dbReference type="GO" id="GO:0005506">
    <property type="term" value="F:iron ion binding"/>
    <property type="evidence" value="ECO:0007669"/>
    <property type="project" value="InterPro"/>
</dbReference>
<dbReference type="GO" id="GO:0019288">
    <property type="term" value="P:isopentenyl diphosphate biosynthetic process, methylerythritol 4-phosphate pathway"/>
    <property type="evidence" value="ECO:0007669"/>
    <property type="project" value="UniProtKB-UniRule"/>
</dbReference>
<dbReference type="GO" id="GO:0016114">
    <property type="term" value="P:terpenoid biosynthetic process"/>
    <property type="evidence" value="ECO:0007669"/>
    <property type="project" value="InterPro"/>
</dbReference>
<dbReference type="FunFam" id="3.20.20.20:FF:000001">
    <property type="entry name" value="4-hydroxy-3-methylbut-2-en-1-yl diphosphate synthase (flavodoxin)"/>
    <property type="match status" value="1"/>
</dbReference>
<dbReference type="FunFam" id="3.30.413.10:FF:000002">
    <property type="entry name" value="4-hydroxy-3-methylbut-2-en-1-yl diphosphate synthase (flavodoxin)"/>
    <property type="match status" value="1"/>
</dbReference>
<dbReference type="Gene3D" id="3.20.20.20">
    <property type="entry name" value="Dihydropteroate synthase-like"/>
    <property type="match status" value="1"/>
</dbReference>
<dbReference type="Gene3D" id="3.30.413.10">
    <property type="entry name" value="Sulfite Reductase Hemoprotein, domain 1"/>
    <property type="match status" value="1"/>
</dbReference>
<dbReference type="HAMAP" id="MF_00159">
    <property type="entry name" value="IspG"/>
    <property type="match status" value="1"/>
</dbReference>
<dbReference type="InterPro" id="IPR011005">
    <property type="entry name" value="Dihydropteroate_synth-like_sf"/>
</dbReference>
<dbReference type="InterPro" id="IPR016425">
    <property type="entry name" value="IspG_bac"/>
</dbReference>
<dbReference type="InterPro" id="IPR004588">
    <property type="entry name" value="IspG_bac-typ"/>
</dbReference>
<dbReference type="InterPro" id="IPR045854">
    <property type="entry name" value="NO2/SO3_Rdtase_4Fe4S_sf"/>
</dbReference>
<dbReference type="NCBIfam" id="TIGR00612">
    <property type="entry name" value="ispG_gcpE"/>
    <property type="match status" value="1"/>
</dbReference>
<dbReference type="NCBIfam" id="NF001540">
    <property type="entry name" value="PRK00366.1"/>
    <property type="match status" value="1"/>
</dbReference>
<dbReference type="PANTHER" id="PTHR30454">
    <property type="entry name" value="4-HYDROXY-3-METHYLBUT-2-EN-1-YL DIPHOSPHATE SYNTHASE"/>
    <property type="match status" value="1"/>
</dbReference>
<dbReference type="PANTHER" id="PTHR30454:SF0">
    <property type="entry name" value="4-HYDROXY-3-METHYLBUT-2-EN-1-YL DIPHOSPHATE SYNTHASE (FERREDOXIN), CHLOROPLASTIC"/>
    <property type="match status" value="1"/>
</dbReference>
<dbReference type="Pfam" id="PF04551">
    <property type="entry name" value="GcpE"/>
    <property type="match status" value="1"/>
</dbReference>
<dbReference type="PIRSF" id="PIRSF004640">
    <property type="entry name" value="IspG"/>
    <property type="match status" value="1"/>
</dbReference>
<dbReference type="SUPFAM" id="SSF51717">
    <property type="entry name" value="Dihydropteroate synthetase-like"/>
    <property type="match status" value="1"/>
</dbReference>
<dbReference type="SUPFAM" id="SSF56014">
    <property type="entry name" value="Nitrite and sulphite reductase 4Fe-4S domain-like"/>
    <property type="match status" value="1"/>
</dbReference>
<sequence length="371" mass="40590">MYNETPIKRRPSTRIYVGNVPIGDGAPIAVQSMTNTKTTDVEATVAQIRALEKVGADIVRVSVPTMDAAEAFKVIKQSVSVPLVADIHFDYRIALKVAEYGVDCLRINPGNIGNEERIRSVVECARDKNIPIRIGVNGGSLEKDLMDKYKEPTPEALLESAMRHVDILDRLNFDQFKVSVKASDVFLAVESYRLLAKQIRQPLHLGITEAGGARAGAVKSAVGLGMLLAEGIGDTLRISLAADPVEEIKVGFDILKSLRIRSRGINFIACPSCSRQEFDVISTVNELERRLEDVTTAMDVSIIGCVVNGPGEALVSHIGLTGGHRKSGYYDEGERQKERFDNDNLVDSLEAKIRAKASQMANRIQVKDTTE</sequence>
<proteinExistence type="inferred from homology"/>
<name>ISPG_SHESM</name>
<gene>
    <name evidence="1" type="primary">ispG</name>
    <name type="ordered locus">Shewmr4_1228</name>
</gene>
<evidence type="ECO:0000255" key="1">
    <source>
        <dbReference type="HAMAP-Rule" id="MF_00159"/>
    </source>
</evidence>
<protein>
    <recommendedName>
        <fullName evidence="1">4-hydroxy-3-methylbut-2-en-1-yl diphosphate synthase (flavodoxin)</fullName>
        <ecNumber evidence="1">1.17.7.3</ecNumber>
    </recommendedName>
    <alternativeName>
        <fullName evidence="1">1-hydroxy-2-methyl-2-(E)-butenyl 4-diphosphate synthase</fullName>
    </alternativeName>
</protein>
<comment type="function">
    <text evidence="1">Converts 2C-methyl-D-erythritol 2,4-cyclodiphosphate (ME-2,4cPP) into 1-hydroxy-2-methyl-2-(E)-butenyl 4-diphosphate.</text>
</comment>
<comment type="catalytic activity">
    <reaction evidence="1">
        <text>(2E)-4-hydroxy-3-methylbut-2-enyl diphosphate + oxidized [flavodoxin] + H2O + 2 H(+) = 2-C-methyl-D-erythritol 2,4-cyclic diphosphate + reduced [flavodoxin]</text>
        <dbReference type="Rhea" id="RHEA:43604"/>
        <dbReference type="Rhea" id="RHEA-COMP:10622"/>
        <dbReference type="Rhea" id="RHEA-COMP:10623"/>
        <dbReference type="ChEBI" id="CHEBI:15377"/>
        <dbReference type="ChEBI" id="CHEBI:15378"/>
        <dbReference type="ChEBI" id="CHEBI:57618"/>
        <dbReference type="ChEBI" id="CHEBI:58210"/>
        <dbReference type="ChEBI" id="CHEBI:58483"/>
        <dbReference type="ChEBI" id="CHEBI:128753"/>
        <dbReference type="EC" id="1.17.7.3"/>
    </reaction>
</comment>
<comment type="cofactor">
    <cofactor evidence="1">
        <name>[4Fe-4S] cluster</name>
        <dbReference type="ChEBI" id="CHEBI:49883"/>
    </cofactor>
    <text evidence="1">Binds 1 [4Fe-4S] cluster.</text>
</comment>
<comment type="pathway">
    <text evidence="1">Isoprenoid biosynthesis; isopentenyl diphosphate biosynthesis via DXP pathway; isopentenyl diphosphate from 1-deoxy-D-xylulose 5-phosphate: step 5/6.</text>
</comment>
<comment type="similarity">
    <text evidence="1">Belongs to the IspG family.</text>
</comment>
<organism>
    <name type="scientific">Shewanella sp. (strain MR-4)</name>
    <dbReference type="NCBI Taxonomy" id="60480"/>
    <lineage>
        <taxon>Bacteria</taxon>
        <taxon>Pseudomonadati</taxon>
        <taxon>Pseudomonadota</taxon>
        <taxon>Gammaproteobacteria</taxon>
        <taxon>Alteromonadales</taxon>
        <taxon>Shewanellaceae</taxon>
        <taxon>Shewanella</taxon>
    </lineage>
</organism>